<evidence type="ECO:0000250" key="1"/>
<evidence type="ECO:0000255" key="2"/>
<evidence type="ECO:0000305" key="3"/>
<gene>
    <name type="primary">G</name>
</gene>
<protein>
    <recommendedName>
        <fullName>Glycoprotein</fullName>
    </recommendedName>
</protein>
<comment type="function">
    <text evidence="1">Attaches the virus to host cellular receptor, inducing endocytosis of the virion. In the endosome, the acidic pH induces conformational changes in the glycoprotein trimer, which trigger fusion between virus and cell membrane (By similarity).</text>
</comment>
<comment type="subunit">
    <text evidence="1">Homotrimer. Interacts with matrix protein (By similarity).</text>
</comment>
<comment type="subcellular location">
    <subcellularLocation>
        <location evidence="3">Virion membrane</location>
        <topology evidence="3">Single-pass type I membrane protein</topology>
    </subcellularLocation>
</comment>
<comment type="PTM">
    <text evidence="1">Glycosylated and palmitoylated by host. Glycosylation is crucial for glycoprotein export at the cell surface (By similarity).</text>
</comment>
<comment type="similarity">
    <text evidence="3">Belongs to the lyssavirus glycoprotein family.</text>
</comment>
<keyword id="KW-0325">Glycoprotein</keyword>
<keyword id="KW-0449">Lipoprotein</keyword>
<keyword id="KW-0472">Membrane</keyword>
<keyword id="KW-0564">Palmitate</keyword>
<keyword id="KW-0732">Signal</keyword>
<keyword id="KW-0812">Transmembrane</keyword>
<keyword id="KW-1133">Transmembrane helix</keyword>
<keyword id="KW-0261">Viral envelope protein</keyword>
<keyword id="KW-0946">Virion</keyword>
<feature type="signal peptide" evidence="2">
    <location>
        <begin position="1"/>
        <end position="25"/>
    </location>
</feature>
<feature type="chain" id="PRO_0000299101" description="Glycoprotein">
    <location>
        <begin position="26"/>
        <end position="522"/>
    </location>
</feature>
<feature type="topological domain" description="Virion surface" evidence="2">
    <location>
        <begin position="26"/>
        <end position="455"/>
    </location>
</feature>
<feature type="transmembrane region" description="Helical" evidence="2">
    <location>
        <begin position="456"/>
        <end position="476"/>
    </location>
</feature>
<feature type="topological domain" description="Intravirion" evidence="2">
    <location>
        <begin position="477"/>
        <end position="522"/>
    </location>
</feature>
<feature type="lipid moiety-binding region" description="S-palmitoyl cysteine; by host" evidence="1">
    <location>
        <position position="480"/>
    </location>
</feature>
<organismHost>
    <name type="scientific">Homo sapiens</name>
    <name type="common">Human</name>
    <dbReference type="NCBI Taxonomy" id="9606"/>
</organismHost>
<organismHost>
    <name type="scientific">Mammalia</name>
    <dbReference type="NCBI Taxonomy" id="40674"/>
</organismHost>
<sequence length="522" mass="58667">MSQLNLIPFFCVIIVLSVEDFPLYTIPEKIGPWTPIDLIHLSCPNNLQSEDEGCGTSSVFSYVELKTGYLTHQKVSGFTCTGVVNEAVTYTNFVGYVTTTFKRKHFKPTALACRDAYHWKISGDPRYEESLHTPYPDNSWLRTVTTTKESLVIISPSIVEMDVYSRTLHSPMFPTGTCSRFYPSSPSCATNHDYTLWLPDDPNLSLACDIFVTSTGKKSMNGSRMCGFTDERGYYRTIKGACKLTLCGKPGLRLFDGTWISFPRPEVTTRCLPNQLVNIHNNRIDEVEHLIVEDLIRKREECLDTLETVLMSKSISFRRLSHFRKLVPGYGKAYTILNGSLMETNVHYLKVDNWSEILPSKGCLKINNQCVAHYKGVFFNGIIKGPDGHILIPEMQSSLLKQHMDLLKAAVFPLKHPLIEPGSLFNKDGDADEFVDVHMPDVHKLVSDVDLGLPDWSLYALIGATIIAFFILICLIRICCKKGGRRNSPTNRPDLPIGLSTTPQPKSKVISSWESYKGTSNV</sequence>
<accession>Q8BDV6</accession>
<organism>
    <name type="scientific">Lagos bat virus</name>
    <name type="common">LBV</name>
    <dbReference type="NCBI Taxonomy" id="38766"/>
    <lineage>
        <taxon>Viruses</taxon>
        <taxon>Riboviria</taxon>
        <taxon>Orthornavirae</taxon>
        <taxon>Negarnaviricota</taxon>
        <taxon>Haploviricotina</taxon>
        <taxon>Monjiviricetes</taxon>
        <taxon>Mononegavirales</taxon>
        <taxon>Rhabdoviridae</taxon>
        <taxon>Alpharhabdovirinae</taxon>
        <taxon>Lyssavirus</taxon>
    </lineage>
</organism>
<reference key="1">
    <citation type="submission" date="2001-10" db="EMBL/GenBank/DDBJ databases">
        <title>Spatio-temporal localization of apoptosis involving caspase-8 activation governs the pathogenicity of lyssavirus infection.</title>
        <authorList>
            <person name="Bourhy H."/>
            <person name="Kassis R."/>
        </authorList>
    </citation>
    <scope>NUCLEOTIDE SEQUENCE [MRNA]</scope>
    <source>
        <strain>Nigeria/8619/1958</strain>
    </source>
</reference>
<proteinExistence type="evidence at transcript level"/>
<dbReference type="EMBL" id="AF429312">
    <property type="protein sequence ID" value="AAN63563.1"/>
    <property type="molecule type" value="mRNA"/>
</dbReference>
<dbReference type="SMR" id="Q8BDV6"/>
<dbReference type="GO" id="GO:0016020">
    <property type="term" value="C:membrane"/>
    <property type="evidence" value="ECO:0007669"/>
    <property type="project" value="UniProtKB-KW"/>
</dbReference>
<dbReference type="GO" id="GO:0019031">
    <property type="term" value="C:viral envelope"/>
    <property type="evidence" value="ECO:0007669"/>
    <property type="project" value="UniProtKB-KW"/>
</dbReference>
<dbReference type="GO" id="GO:0055036">
    <property type="term" value="C:virion membrane"/>
    <property type="evidence" value="ECO:0007669"/>
    <property type="project" value="UniProtKB-SubCell"/>
</dbReference>
<dbReference type="Gene3D" id="2.30.29.130">
    <property type="match status" value="1"/>
</dbReference>
<dbReference type="InterPro" id="IPR055448">
    <property type="entry name" value="PH_Rhabdo_glycop"/>
</dbReference>
<dbReference type="InterPro" id="IPR055447">
    <property type="entry name" value="Rhabdo_glycop_CD"/>
</dbReference>
<dbReference type="InterPro" id="IPR001903">
    <property type="entry name" value="Rhabdo_glycop_FD"/>
</dbReference>
<dbReference type="Pfam" id="PF24834">
    <property type="entry name" value="PH_Rhabdo_glycop"/>
    <property type="match status" value="1"/>
</dbReference>
<dbReference type="Pfam" id="PF24833">
    <property type="entry name" value="Rhabdo_glycop_CD"/>
    <property type="match status" value="1"/>
</dbReference>
<dbReference type="Pfam" id="PF00974">
    <property type="entry name" value="Rhabdo_glycop_FD"/>
    <property type="match status" value="1"/>
</dbReference>
<dbReference type="SUPFAM" id="SSF161008">
    <property type="entry name" value="Viral glycoprotein ectodomain-like"/>
    <property type="match status" value="1"/>
</dbReference>
<name>GLYCO_LBV</name>